<evidence type="ECO:0000250" key="1"/>
<evidence type="ECO:0000269" key="2">
    <source>
    </source>
</evidence>
<evidence type="ECO:0000269" key="3">
    <source>
    </source>
</evidence>
<evidence type="ECO:0000305" key="4"/>
<evidence type="ECO:0007829" key="5">
    <source>
        <dbReference type="PDB" id="3HWC"/>
    </source>
</evidence>
<feature type="chain" id="PRO_0000418743" description="FADH(2)-dependent monooxygenase TftD">
    <location>
        <begin position="1"/>
        <end position="515"/>
    </location>
</feature>
<feature type="binding site" evidence="1">
    <location>
        <begin position="100"/>
        <end position="104"/>
    </location>
    <ligand>
        <name>substrate</name>
    </ligand>
</feature>
<feature type="binding site" evidence="1">
    <location>
        <begin position="151"/>
        <end position="153"/>
    </location>
    <ligand>
        <name>FAD</name>
        <dbReference type="ChEBI" id="CHEBI:57692"/>
    </ligand>
</feature>
<feature type="binding site" evidence="1">
    <location>
        <begin position="157"/>
        <end position="160"/>
    </location>
    <ligand>
        <name>FAD</name>
        <dbReference type="ChEBI" id="CHEBI:57692"/>
    </ligand>
</feature>
<feature type="binding site" evidence="1">
    <location>
        <position position="192"/>
    </location>
    <ligand>
        <name>FAD</name>
        <dbReference type="ChEBI" id="CHEBI:57692"/>
    </ligand>
</feature>
<feature type="binding site" evidence="1">
    <location>
        <begin position="203"/>
        <end position="204"/>
    </location>
    <ligand>
        <name>substrate</name>
    </ligand>
</feature>
<feature type="binding site" evidence="1">
    <location>
        <begin position="457"/>
        <end position="460"/>
    </location>
    <ligand>
        <name>FAD</name>
        <dbReference type="ChEBI" id="CHEBI:57692"/>
    </ligand>
</feature>
<feature type="mutagenesis site" description="Loss of catalytic activity." evidence="3">
    <original>H</original>
    <variation>A</variation>
    <location>
        <position position="289"/>
    </location>
</feature>
<feature type="helix" evidence="5">
    <location>
        <begin position="4"/>
        <end position="10"/>
    </location>
</feature>
<feature type="strand" evidence="5">
    <location>
        <begin position="16"/>
        <end position="19"/>
    </location>
</feature>
<feature type="strand" evidence="5">
    <location>
        <begin position="22"/>
        <end position="25"/>
    </location>
</feature>
<feature type="turn" evidence="5">
    <location>
        <begin position="27"/>
        <end position="29"/>
    </location>
</feature>
<feature type="turn" evidence="5">
    <location>
        <begin position="31"/>
        <end position="33"/>
    </location>
</feature>
<feature type="helix" evidence="5">
    <location>
        <begin position="34"/>
        <end position="46"/>
    </location>
</feature>
<feature type="helix" evidence="5">
    <location>
        <begin position="50"/>
        <end position="52"/>
    </location>
</feature>
<feature type="helix" evidence="5">
    <location>
        <begin position="53"/>
        <end position="56"/>
    </location>
</feature>
<feature type="strand" evidence="5">
    <location>
        <begin position="57"/>
        <end position="59"/>
    </location>
</feature>
<feature type="strand" evidence="5">
    <location>
        <begin position="65"/>
        <end position="67"/>
    </location>
</feature>
<feature type="helix" evidence="5">
    <location>
        <begin position="68"/>
        <end position="70"/>
    </location>
</feature>
<feature type="helix" evidence="5">
    <location>
        <begin position="76"/>
        <end position="92"/>
    </location>
</feature>
<feature type="helix" evidence="5">
    <location>
        <begin position="94"/>
        <end position="96"/>
    </location>
</feature>
<feature type="helix" evidence="5">
    <location>
        <begin position="102"/>
        <end position="106"/>
    </location>
</feature>
<feature type="helix" evidence="5">
    <location>
        <begin position="107"/>
        <end position="109"/>
    </location>
</feature>
<feature type="helix" evidence="5">
    <location>
        <begin position="110"/>
        <end position="113"/>
    </location>
</feature>
<feature type="helix" evidence="5">
    <location>
        <begin position="117"/>
        <end position="121"/>
    </location>
</feature>
<feature type="helix" evidence="5">
    <location>
        <begin position="131"/>
        <end position="144"/>
    </location>
</feature>
<feature type="turn" evidence="5">
    <location>
        <begin position="164"/>
        <end position="166"/>
    </location>
</feature>
<feature type="strand" evidence="5">
    <location>
        <begin position="173"/>
        <end position="177"/>
    </location>
</feature>
<feature type="strand" evidence="5">
    <location>
        <begin position="179"/>
        <end position="193"/>
    </location>
</feature>
<feature type="helix" evidence="5">
    <location>
        <begin position="194"/>
        <end position="196"/>
    </location>
</feature>
<feature type="strand" evidence="5">
    <location>
        <begin position="198"/>
        <end position="202"/>
    </location>
</feature>
<feature type="helix" evidence="5">
    <location>
        <begin position="212"/>
        <end position="214"/>
    </location>
</feature>
<feature type="strand" evidence="5">
    <location>
        <begin position="216"/>
        <end position="221"/>
    </location>
</feature>
<feature type="strand" evidence="5">
    <location>
        <begin position="227"/>
        <end position="231"/>
    </location>
</feature>
<feature type="turn" evidence="5">
    <location>
        <begin position="240"/>
        <end position="242"/>
    </location>
</feature>
<feature type="turn" evidence="5">
    <location>
        <begin position="244"/>
        <end position="247"/>
    </location>
</feature>
<feature type="strand" evidence="5">
    <location>
        <begin position="253"/>
        <end position="264"/>
    </location>
</feature>
<feature type="helix" evidence="5">
    <location>
        <begin position="265"/>
        <end position="267"/>
    </location>
</feature>
<feature type="strand" evidence="5">
    <location>
        <begin position="268"/>
        <end position="272"/>
    </location>
</feature>
<feature type="helix" evidence="5">
    <location>
        <begin position="276"/>
        <end position="278"/>
    </location>
</feature>
<feature type="helix" evidence="5">
    <location>
        <begin position="280"/>
        <end position="314"/>
    </location>
</feature>
<feature type="helix" evidence="5">
    <location>
        <begin position="320"/>
        <end position="345"/>
    </location>
</feature>
<feature type="helix" evidence="5">
    <location>
        <begin position="359"/>
        <end position="384"/>
    </location>
</feature>
<feature type="helix" evidence="5">
    <location>
        <begin position="385"/>
        <end position="388"/>
    </location>
</feature>
<feature type="helix" evidence="5">
    <location>
        <begin position="394"/>
        <end position="398"/>
    </location>
</feature>
<feature type="turn" evidence="5">
    <location>
        <begin position="400"/>
        <end position="402"/>
    </location>
</feature>
<feature type="helix" evidence="5">
    <location>
        <begin position="403"/>
        <end position="409"/>
    </location>
</feature>
<feature type="helix" evidence="5">
    <location>
        <begin position="418"/>
        <end position="431"/>
    </location>
</feature>
<feature type="helix" evidence="5">
    <location>
        <begin position="434"/>
        <end position="441"/>
    </location>
</feature>
<feature type="strand" evidence="5">
    <location>
        <begin position="444"/>
        <end position="447"/>
    </location>
</feature>
<feature type="turn" evidence="5">
    <location>
        <begin position="449"/>
        <end position="453"/>
    </location>
</feature>
<feature type="turn" evidence="5">
    <location>
        <begin position="455"/>
        <end position="460"/>
    </location>
</feature>
<feature type="helix" evidence="5">
    <location>
        <begin position="470"/>
        <end position="477"/>
    </location>
</feature>
<name>TFTD_BURCE</name>
<sequence>MRTGKQYLESLNDGRVVWVGNEKIDNVATHPLTRDYAERVAQFYDLHHRPDLQDVLTFVDADGVRRSRQWQDPKDAAGLRVKRKYHETILREIAAGSYGRLPDAHNYTFTTYADDPEVWEKQSIGAEGRNLTQNIHNFLKLLREKDLNCPLNFVDPQTDRSSDAAQARSPNLRIVEKTDDGIIVNGVKAVGTGIAFGDYMHIGCLYRPGIPGEQVIFAAIPTNTPGVTVFCRESTVKNDPAEHPLASQGDELDSTTVFDNVFIPWEQVFHIGNPEHAKLYPQRIFDWVHYHILIRQVLRAELIVGLAILITEHIGTSKLPTVSARVAKLVAFHLAMQAHLIASEETGFHTKGGRYKPNPLIYDFGRAHFLQNQMSVMYELLDLAGRSSLMIPSEGQWDDSQSGQWFVKLNNGPKGNPRERVQIGRVIRDLYLTDWGGRQFMFENFNGTPLFAVFAATMTRDDMSAAGTYGKFASQVCGIEFGGAEPTAYAATADYAKALDKGLAPEPAAAESATS</sequence>
<dbReference type="EC" id="1.14.14.-"/>
<dbReference type="EMBL" id="U83405">
    <property type="protein sequence ID" value="AAC23548.2"/>
    <property type="molecule type" value="Genomic_DNA"/>
</dbReference>
<dbReference type="PDB" id="3HWC">
    <property type="method" value="X-ray"/>
    <property type="resolution" value="2.50 A"/>
    <property type="chains" value="A/B/C/D=1-515"/>
</dbReference>
<dbReference type="PDBsum" id="3HWC"/>
<dbReference type="SMR" id="O87009"/>
<dbReference type="KEGG" id="ag:AAC23548"/>
<dbReference type="BioCyc" id="MetaCyc:MONOMER-14674"/>
<dbReference type="SABIO-RK" id="O87009"/>
<dbReference type="EvolutionaryTrace" id="O87009"/>
<dbReference type="GO" id="GO:0016712">
    <property type="term" value="F:oxidoreductase activity, acting on paired donors, with incorporation or reduction of molecular oxygen, reduced flavin or flavoprotein as one donor, and incorporation of one atom of oxygen"/>
    <property type="evidence" value="ECO:0000314"/>
    <property type="project" value="UniProtKB"/>
</dbReference>
<dbReference type="GO" id="GO:0016627">
    <property type="term" value="F:oxidoreductase activity, acting on the CH-CH group of donors"/>
    <property type="evidence" value="ECO:0007669"/>
    <property type="project" value="InterPro"/>
</dbReference>
<dbReference type="GO" id="GO:0009056">
    <property type="term" value="P:catabolic process"/>
    <property type="evidence" value="ECO:0007669"/>
    <property type="project" value="UniProtKB-KW"/>
</dbReference>
<dbReference type="GO" id="GO:0051289">
    <property type="term" value="P:protein homotetramerization"/>
    <property type="evidence" value="ECO:0000314"/>
    <property type="project" value="UniProtKB"/>
</dbReference>
<dbReference type="FunFam" id="1.10.3140.10:FF:000001">
    <property type="entry name" value="4-hydroxyphenylacetate 3-monooxygenase oxygenase component"/>
    <property type="match status" value="1"/>
</dbReference>
<dbReference type="FunFam" id="2.40.110.10:FF:000026">
    <property type="entry name" value="4-hydroxyphenylacetate 3-monooxygenase oxygenase component"/>
    <property type="match status" value="1"/>
</dbReference>
<dbReference type="Gene3D" id="1.10.3140.10">
    <property type="entry name" value="4-hydroxybutyryl-coa dehydratase, domain 1"/>
    <property type="match status" value="1"/>
</dbReference>
<dbReference type="Gene3D" id="2.40.110.10">
    <property type="entry name" value="Butyryl-CoA Dehydrogenase, subunit A, domain 2"/>
    <property type="match status" value="1"/>
</dbReference>
<dbReference type="Gene3D" id="1.20.140.10">
    <property type="entry name" value="Butyryl-CoA Dehydrogenase, subunit A, domain 3"/>
    <property type="match status" value="1"/>
</dbReference>
<dbReference type="InterPro" id="IPR046373">
    <property type="entry name" value="Acyl-CoA_Oxase/DH_mid-dom_sf"/>
</dbReference>
<dbReference type="InterPro" id="IPR036250">
    <property type="entry name" value="AcylCo_DH-like_C"/>
</dbReference>
<dbReference type="InterPro" id="IPR009100">
    <property type="entry name" value="AcylCoA_DH/oxidase_NM_dom_sf"/>
</dbReference>
<dbReference type="InterPro" id="IPR004925">
    <property type="entry name" value="HpaB/PvcC/4-BUDH"/>
</dbReference>
<dbReference type="InterPro" id="IPR024719">
    <property type="entry name" value="HpaB/PvcC/4-BUDH_C"/>
</dbReference>
<dbReference type="InterPro" id="IPR024674">
    <property type="entry name" value="HpaB/PvcC/4-BUDH_N"/>
</dbReference>
<dbReference type="PANTHER" id="PTHR36117">
    <property type="entry name" value="4-HYDROXYPHENYLACETATE 3-MONOOXYGENASE-RELATED"/>
    <property type="match status" value="1"/>
</dbReference>
<dbReference type="PANTHER" id="PTHR36117:SF3">
    <property type="entry name" value="4-HYDROXYPHENYLACETATE 3-MONOOXYGENASE-RELATED"/>
    <property type="match status" value="1"/>
</dbReference>
<dbReference type="Pfam" id="PF03241">
    <property type="entry name" value="HpaB"/>
    <property type="match status" value="1"/>
</dbReference>
<dbReference type="Pfam" id="PF11794">
    <property type="entry name" value="HpaB_N"/>
    <property type="match status" value="1"/>
</dbReference>
<dbReference type="SUPFAM" id="SSF47203">
    <property type="entry name" value="Acyl-CoA dehydrogenase C-terminal domain-like"/>
    <property type="match status" value="1"/>
</dbReference>
<dbReference type="SUPFAM" id="SSF56645">
    <property type="entry name" value="Acyl-CoA dehydrogenase NM domain-like"/>
    <property type="match status" value="1"/>
</dbReference>
<protein>
    <recommendedName>
        <fullName>FADH(2)-dependent monooxygenase TftD</fullName>
        <ecNumber>1.14.14.-</ecNumber>
    </recommendedName>
    <alternativeName>
        <fullName>Chlorophenol-4-monooxygenase component 2</fullName>
    </alternativeName>
    <alternativeName>
        <fullName>Two component enzyme D</fullName>
    </alternativeName>
</protein>
<comment type="function">
    <text evidence="2 3">Oxygenase component of a two-component system that degrades 2,4,5-trichlorophenol. Uses FADH(2) supplied by TftC to oxidize 2,4,5-trichlorophenol (2,4,5-TCP) to 2,5-dichloro-p-benzoquinone, which is chemically reduced to 2,5-dichloro-p-hydroquinone (2,5-DiCHQ). Then, TftD oxidizes the latter to 5-chloro-2-hydroxy-p-benzoquinone.</text>
</comment>
<comment type="biophysicochemical properties">
    <kinetics>
        <KM evidence="2 3">35.8 uM for 2,4,5-trichlorophenol</KM>
        <KM evidence="2 3">39.9 uM for 2,4,6-trichlorophenol</KM>
        <KM evidence="2 3">4.3 uM for 2,5-dichloro-p-hydroquinone</KM>
        <text>kcat is 0.67 sec(-1) with 2,4,5-trichlorophenol as substrate. kcat is 0.41 sec(-1) with 2,4,6-trichlorophenol as substrate. kcat is 0.1 sec(-1) with 2,5-dichloro-p-hydroquinone as substrate.</text>
    </kinetics>
</comment>
<comment type="pathway">
    <text>Xenobiotic degradation.</text>
</comment>
<comment type="subunit">
    <text evidence="3">Homotetramer. The chlorophenol-4-monooxygenase is composed of an oxygenase component TftD and a reductase component TftC.</text>
</comment>
<comment type="similarity">
    <text evidence="4">Belongs to the FADH(2)-utilizing monooxygenase family.</text>
</comment>
<organism>
    <name type="scientific">Burkholderia cepacia</name>
    <name type="common">Pseudomonas cepacia</name>
    <dbReference type="NCBI Taxonomy" id="292"/>
    <lineage>
        <taxon>Bacteria</taxon>
        <taxon>Pseudomonadati</taxon>
        <taxon>Pseudomonadota</taxon>
        <taxon>Betaproteobacteria</taxon>
        <taxon>Burkholderiales</taxon>
        <taxon>Burkholderiaceae</taxon>
        <taxon>Burkholderia</taxon>
        <taxon>Burkholderia cepacia complex</taxon>
    </lineage>
</organism>
<accession>O87009</accession>
<gene>
    <name type="primary">tftD</name>
</gene>
<reference key="1">
    <citation type="journal article" date="1998" name="Appl. Environ. Microbiol.">
        <title>Genes for 2,4,5-trichlorophenoxyacetic acid metabolism in Burkholderia cepacia AC1100: characterization of the tftC and tftD genes and locations of the tft operons on multiple replicons.</title>
        <authorList>
            <person name="Hubner A."/>
            <person name="Danganan C.E."/>
            <person name="Xun L."/>
            <person name="Chakrabarty A.M."/>
            <person name="Hendrickson W."/>
        </authorList>
    </citation>
    <scope>NUCLEOTIDE SEQUENCE [GENOMIC DNA]</scope>
    <source>
        <strain>AC1100</strain>
    </source>
</reference>
<reference key="2">
    <citation type="journal article" date="2003" name="J. Bacteriol.">
        <title>Characterization of chlorophenol 4-monooxygenase (TftD) and NADH:flavin adenine dinucleotide oxidoreductase (TftC) of Burkholderia cepacia AC1100.</title>
        <authorList>
            <person name="Gisi M.R."/>
            <person name="Xun L."/>
        </authorList>
    </citation>
    <scope>FUNCTION</scope>
    <scope>CATALYTIC ACTIVITY</scope>
    <scope>BIOPHYSICOCHEMICAL PROPERTIES</scope>
    <source>
        <strain>AC1100</strain>
    </source>
</reference>
<reference key="3">
    <citation type="journal article" date="2010" name="J. Biol. Chem.">
        <title>Characterization of chlorophenol 4-monooxygenase (TftD) and NADH:FAD oxidoreductase (TftC) of Burkholderia cepacia AC1100.</title>
        <authorList>
            <person name="Webb B.N."/>
            <person name="Ballinger J.W."/>
            <person name="Kim E."/>
            <person name="Belchik S.M."/>
            <person name="Lam K.S."/>
            <person name="Youn B."/>
            <person name="Nissen M.S."/>
            <person name="Xun L."/>
            <person name="Kang C."/>
        </authorList>
    </citation>
    <scope>X-RAY CRYSTALLOGRAPHY (2.50 ANGSTROMS)</scope>
    <scope>FUNCTION</scope>
    <scope>CATALYTIC ACTIVITY</scope>
    <scope>SUBUNIT</scope>
    <scope>BIOPHYSICOCHEMICAL PROPERTIES</scope>
    <scope>MUTAGENESIS OF HIS-289</scope>
</reference>
<keyword id="KW-0002">3D-structure</keyword>
<keyword id="KW-0058">Aromatic hydrocarbons catabolism</keyword>
<keyword id="KW-0274">FAD</keyword>
<keyword id="KW-0285">Flavoprotein</keyword>
<keyword id="KW-0503">Monooxygenase</keyword>
<keyword id="KW-0560">Oxidoreductase</keyword>
<proteinExistence type="evidence at protein level"/>